<comment type="function">
    <text evidence="1">Cooperates with insulin-like peptides to stimulate the proliferation, polarization and motility of imaginal disk cells. May act by stabilizing the binding of insulin-like peptides to its receptor through a simultaneous interaction with both molecules to form a multiprotein signaling complex (By similarity).</text>
</comment>
<comment type="subcellular location">
    <subcellularLocation>
        <location evidence="1">Secreted</location>
    </subcellularLocation>
    <text evidence="1">Secreted in hemolymph. It is probably transported to target tissues via hemolymph.</text>
</comment>
<comment type="PTM">
    <text evidence="1">Glycosylated.</text>
</comment>
<comment type="miscellaneous">
    <text>Lacks the typical Glu active site in position 150 that is replaced by a Gln residue, preventing the hydrolase activity. Its precise function remains unclear.</text>
</comment>
<comment type="similarity">
    <text evidence="4">Belongs to the glycosyl hydrolase 18 family. IDGF subfamily.</text>
</comment>
<evidence type="ECO:0000250" key="1"/>
<evidence type="ECO:0000255" key="2"/>
<evidence type="ECO:0000255" key="3">
    <source>
        <dbReference type="PROSITE-ProRule" id="PRU01258"/>
    </source>
</evidence>
<evidence type="ECO:0000305" key="4"/>
<name>IDGF1_DROYA</name>
<protein>
    <recommendedName>
        <fullName>Chitinase-like protein Idgf1</fullName>
    </recommendedName>
    <alternativeName>
        <fullName>Imaginal disk growth factor protein 1</fullName>
    </alternativeName>
</protein>
<dbReference type="EMBL" id="AF394712">
    <property type="protein sequence ID" value="AAM69644.1"/>
    <property type="molecule type" value="Genomic_DNA"/>
</dbReference>
<dbReference type="SMR" id="Q8MX40"/>
<dbReference type="CAZy" id="GH18">
    <property type="family name" value="Glycoside Hydrolase Family 18"/>
</dbReference>
<dbReference type="GlyCosmos" id="Q8MX40">
    <property type="glycosylation" value="3 sites, No reported glycans"/>
</dbReference>
<dbReference type="eggNOG" id="KOG2806">
    <property type="taxonomic scope" value="Eukaryota"/>
</dbReference>
<dbReference type="OrthoDB" id="76388at2759"/>
<dbReference type="GO" id="GO:0005576">
    <property type="term" value="C:extracellular region"/>
    <property type="evidence" value="ECO:0007669"/>
    <property type="project" value="UniProtKB-SubCell"/>
</dbReference>
<dbReference type="GO" id="GO:0008061">
    <property type="term" value="F:chitin binding"/>
    <property type="evidence" value="ECO:0007669"/>
    <property type="project" value="InterPro"/>
</dbReference>
<dbReference type="GO" id="GO:0004568">
    <property type="term" value="F:chitinase activity"/>
    <property type="evidence" value="ECO:0007669"/>
    <property type="project" value="TreeGrafter"/>
</dbReference>
<dbReference type="GO" id="GO:0008084">
    <property type="term" value="F:imaginal disc growth factor receptor binding"/>
    <property type="evidence" value="ECO:0000250"/>
    <property type="project" value="UniProtKB"/>
</dbReference>
<dbReference type="GO" id="GO:0005975">
    <property type="term" value="P:carbohydrate metabolic process"/>
    <property type="evidence" value="ECO:0007669"/>
    <property type="project" value="InterPro"/>
</dbReference>
<dbReference type="GO" id="GO:0006032">
    <property type="term" value="P:chitin catabolic process"/>
    <property type="evidence" value="ECO:0007669"/>
    <property type="project" value="TreeGrafter"/>
</dbReference>
<dbReference type="GO" id="GO:0040003">
    <property type="term" value="P:chitin-based cuticle development"/>
    <property type="evidence" value="ECO:0007669"/>
    <property type="project" value="EnsemblMetazoa"/>
</dbReference>
<dbReference type="GO" id="GO:0018990">
    <property type="term" value="P:ecdysis, chitin-based cuticle"/>
    <property type="evidence" value="ECO:0007669"/>
    <property type="project" value="EnsemblMetazoa"/>
</dbReference>
<dbReference type="GO" id="GO:1990399">
    <property type="term" value="P:epithelium regeneration"/>
    <property type="evidence" value="ECO:0007669"/>
    <property type="project" value="EnsemblMetazoa"/>
</dbReference>
<dbReference type="GO" id="GO:0007444">
    <property type="term" value="P:imaginal disc development"/>
    <property type="evidence" value="ECO:0000250"/>
    <property type="project" value="UniProtKB"/>
</dbReference>
<dbReference type="GO" id="GO:2000035">
    <property type="term" value="P:regulation of stem cell division"/>
    <property type="evidence" value="ECO:0007669"/>
    <property type="project" value="EnsemblMetazoa"/>
</dbReference>
<dbReference type="GO" id="GO:0042060">
    <property type="term" value="P:wound healing"/>
    <property type="evidence" value="ECO:0007669"/>
    <property type="project" value="EnsemblMetazoa"/>
</dbReference>
<dbReference type="CDD" id="cd02873">
    <property type="entry name" value="GH18_IDGF"/>
    <property type="match status" value="1"/>
</dbReference>
<dbReference type="FunFam" id="3.10.50.10:FF:000007">
    <property type="entry name" value="chitinase-like protein Idgf4"/>
    <property type="match status" value="1"/>
</dbReference>
<dbReference type="FunFam" id="3.20.20.80:FF:000071">
    <property type="entry name" value="Imaginal disc growth factor"/>
    <property type="match status" value="1"/>
</dbReference>
<dbReference type="Gene3D" id="3.10.50.10">
    <property type="match status" value="1"/>
</dbReference>
<dbReference type="Gene3D" id="3.20.20.80">
    <property type="entry name" value="Glycosidases"/>
    <property type="match status" value="1"/>
</dbReference>
<dbReference type="InterPro" id="IPR011583">
    <property type="entry name" value="Chitinase_II/V-like_cat"/>
</dbReference>
<dbReference type="InterPro" id="IPR029070">
    <property type="entry name" value="Chitinase_insertion_sf"/>
</dbReference>
<dbReference type="InterPro" id="IPR001223">
    <property type="entry name" value="Glyco_hydro18_cat"/>
</dbReference>
<dbReference type="InterPro" id="IPR017853">
    <property type="entry name" value="Glycoside_hydrolase_SF"/>
</dbReference>
<dbReference type="InterPro" id="IPR050314">
    <property type="entry name" value="Glycosyl_Hydrlase_18"/>
</dbReference>
<dbReference type="InterPro" id="IPR015520">
    <property type="entry name" value="IDGF"/>
</dbReference>
<dbReference type="PANTHER" id="PTHR11177">
    <property type="entry name" value="CHITINASE"/>
    <property type="match status" value="1"/>
</dbReference>
<dbReference type="PANTHER" id="PTHR11177:SF235">
    <property type="entry name" value="CHITINASE-LIKE PROTEIN IDGF1-RELATED"/>
    <property type="match status" value="1"/>
</dbReference>
<dbReference type="Pfam" id="PF00704">
    <property type="entry name" value="Glyco_hydro_18"/>
    <property type="match status" value="1"/>
</dbReference>
<dbReference type="SMART" id="SM00636">
    <property type="entry name" value="Glyco_18"/>
    <property type="match status" value="1"/>
</dbReference>
<dbReference type="SUPFAM" id="SSF51445">
    <property type="entry name" value="(Trans)glycosidases"/>
    <property type="match status" value="1"/>
</dbReference>
<dbReference type="SUPFAM" id="SSF54556">
    <property type="entry name" value="Chitinase insertion domain"/>
    <property type="match status" value="1"/>
</dbReference>
<dbReference type="PROSITE" id="PS51910">
    <property type="entry name" value="GH18_2"/>
    <property type="match status" value="1"/>
</dbReference>
<feature type="signal peptide" evidence="1">
    <location>
        <begin position="1"/>
        <end position="20"/>
    </location>
</feature>
<feature type="chain" id="PRO_0000011982" description="Chitinase-like protein Idgf1">
    <location>
        <begin position="21"/>
        <end position="439"/>
    </location>
</feature>
<feature type="domain" description="GH18" evidence="3">
    <location>
        <begin position="22"/>
        <end position="439"/>
    </location>
</feature>
<feature type="glycosylation site" description="N-linked (GlcNAc...) asparagine" evidence="2">
    <location>
        <position position="122"/>
    </location>
</feature>
<feature type="glycosylation site" description="N-linked (GlcNAc...) asparagine" evidence="1">
    <location>
        <position position="218"/>
    </location>
</feature>
<feature type="glycosylation site" description="N-linked (GlcNAc...) asparagine" evidence="2">
    <location>
        <position position="346"/>
    </location>
</feature>
<feature type="disulfide bond" evidence="3">
    <location>
        <begin position="26"/>
        <end position="53"/>
    </location>
</feature>
<feature type="disulfide bond" evidence="1">
    <location>
        <begin position="340"/>
        <end position="423"/>
    </location>
</feature>
<organism>
    <name type="scientific">Drosophila yakuba</name>
    <name type="common">Fruit fly</name>
    <dbReference type="NCBI Taxonomy" id="7245"/>
    <lineage>
        <taxon>Eukaryota</taxon>
        <taxon>Metazoa</taxon>
        <taxon>Ecdysozoa</taxon>
        <taxon>Arthropoda</taxon>
        <taxon>Hexapoda</taxon>
        <taxon>Insecta</taxon>
        <taxon>Pterygota</taxon>
        <taxon>Neoptera</taxon>
        <taxon>Endopterygota</taxon>
        <taxon>Diptera</taxon>
        <taxon>Brachycera</taxon>
        <taxon>Muscomorpha</taxon>
        <taxon>Ephydroidea</taxon>
        <taxon>Drosophilidae</taxon>
        <taxon>Drosophila</taxon>
        <taxon>Sophophora</taxon>
    </lineage>
</organism>
<sequence length="439" mass="49244">MRFQLCYLLGLLSVTSLSHAASNLICYYDSTSYLRQGLAKMHTHELDLALQFCTHLVYGYAGLKAGTLELFSLNVDLDMFYYKEITALRQKFPQLKILLSVGGDRDVDEAHPNKYVELLEANRTFQQNFIDSSMILVKRNGFDGLDLAFQLPRNKPRKVHGSLGTYWKSFKKLFTGDFVVDPLAEQHKSQFTDLVGNLKNAFRSANLMLSLTVLPNVNSTWYFDVPKLHPQFEYINLAAFDFLTPVRNPEEADFTAPIFFQDEQNRLPHLNVEFQVNYWLQNNCPGQKLNLGIASYGRAWKLSKGSGLSGAPIVQETCGAAPGGIQIQSADGLLSWPEICSKLSQNASAQYRGEMAPLRKVTDLTQKYGNYALRPADDNGDFGVWLSFDDPDFAGIKAAYAKGKGLGGVAIFDLSYDDFRGLCTGQKFPIVRSIKYFMG</sequence>
<gene>
    <name type="primary">Idgf1</name>
</gene>
<accession>Q8MX40</accession>
<proteinExistence type="inferred from homology"/>
<keyword id="KW-0217">Developmental protein</keyword>
<keyword id="KW-1015">Disulfide bond</keyword>
<keyword id="KW-0325">Glycoprotein</keyword>
<keyword id="KW-0964">Secreted</keyword>
<keyword id="KW-0732">Signal</keyword>
<reference key="1">
    <citation type="journal article" date="2002" name="Genetics">
        <title>Polymorphism patterns in two tightly linked developmental genes, Idgf1 and Idgf3, of Drosophila melanogaster.</title>
        <authorList>
            <person name="Zurovcova M."/>
            <person name="Ayala F.J."/>
        </authorList>
    </citation>
    <scope>NUCLEOTIDE SEQUENCE [GENOMIC DNA]</scope>
    <source>
        <strain>#14021-0261.0</strain>
    </source>
</reference>